<protein>
    <recommendedName>
        <fullName>Hydroxysteroid 11-beta-dehydrogenase 1-like protein</fullName>
        <ecNumber evidence="5">1.1.1.-</ecNumber>
    </recommendedName>
    <alternativeName>
        <fullName>11-beta-hydroxysteroid dehydrogenase type 3</fullName>
        <shortName>11-DH3</shortName>
        <shortName>11-beta-HSD3</shortName>
    </alternativeName>
    <alternativeName>
        <fullName>Short chain dehydrogenase/reductase family 26C member 2</fullName>
    </alternativeName>
    <alternativeName>
        <fullName evidence="7">Short-chain dehydrogenase/reductase 10B</fullName>
    </alternativeName>
</protein>
<organism>
    <name type="scientific">Homo sapiens</name>
    <name type="common">Human</name>
    <dbReference type="NCBI Taxonomy" id="9606"/>
    <lineage>
        <taxon>Eukaryota</taxon>
        <taxon>Metazoa</taxon>
        <taxon>Chordata</taxon>
        <taxon>Craniata</taxon>
        <taxon>Vertebrata</taxon>
        <taxon>Euteleostomi</taxon>
        <taxon>Mammalia</taxon>
        <taxon>Eutheria</taxon>
        <taxon>Euarchontoglires</taxon>
        <taxon>Primates</taxon>
        <taxon>Haplorrhini</taxon>
        <taxon>Catarrhini</taxon>
        <taxon>Hominidae</taxon>
        <taxon>Homo</taxon>
    </lineage>
</organism>
<feature type="signal peptide" evidence="2">
    <location>
        <begin position="1"/>
        <end position="15"/>
    </location>
</feature>
<feature type="chain" id="PRO_0000316816" description="Hydroxysteroid 11-beta-dehydrogenase 1-like protein">
    <location>
        <begin position="16"/>
        <end position="315"/>
    </location>
</feature>
<feature type="region of interest" description="Disordered" evidence="4">
    <location>
        <begin position="221"/>
        <end position="286"/>
    </location>
</feature>
<feature type="compositionally biased region" description="Basic and acidic residues" evidence="4">
    <location>
        <begin position="277"/>
        <end position="286"/>
    </location>
</feature>
<feature type="active site" description="Proton acceptor" evidence="3">
    <location>
        <position position="178"/>
    </location>
</feature>
<feature type="binding site" evidence="1">
    <location>
        <begin position="36"/>
        <end position="62"/>
    </location>
    <ligand>
        <name>NADP(+)</name>
        <dbReference type="ChEBI" id="CHEBI:58349"/>
    </ligand>
</feature>
<feature type="binding site" evidence="1">
    <location>
        <begin position="87"/>
        <end position="88"/>
    </location>
    <ligand>
        <name>NADP(+)</name>
        <dbReference type="ChEBI" id="CHEBI:58349"/>
    </ligand>
</feature>
<feature type="binding site" evidence="1">
    <location>
        <begin position="114"/>
        <end position="116"/>
    </location>
    <ligand>
        <name>NADP(+)</name>
        <dbReference type="ChEBI" id="CHEBI:58349"/>
    </ligand>
</feature>
<feature type="binding site" evidence="1">
    <location>
        <position position="165"/>
    </location>
    <ligand>
        <name>substrate</name>
    </ligand>
</feature>
<feature type="binding site" evidence="1">
    <location>
        <begin position="178"/>
        <end position="182"/>
    </location>
    <ligand>
        <name>NADP(+)</name>
        <dbReference type="ChEBI" id="CHEBI:58349"/>
    </ligand>
</feature>
<feature type="binding site" evidence="1">
    <location>
        <begin position="211"/>
        <end position="217"/>
    </location>
    <ligand>
        <name>NADP(+)</name>
        <dbReference type="ChEBI" id="CHEBI:58349"/>
    </ligand>
</feature>
<feature type="splice variant" id="VSP_030791" description="In isoform 4 and isoform 7." evidence="6 8">
    <location>
        <begin position="1"/>
        <end position="134"/>
    </location>
</feature>
<feature type="splice variant" id="VSP_030792" description="In isoform 5." evidence="6 8">
    <location>
        <begin position="1"/>
        <end position="87"/>
    </location>
</feature>
<feature type="splice variant" id="VSP_030793" description="In isoform 3 and isoform 6." evidence="8">
    <location>
        <begin position="25"/>
        <end position="105"/>
    </location>
</feature>
<feature type="splice variant" id="VSP_030794" description="In isoform 8." evidence="6">
    <original>VVGNCRKLGAPKVFYIAAD</original>
    <variation>ARWLTLVVSTLGGRGKWIT</variation>
    <location>
        <begin position="69"/>
        <end position="87"/>
    </location>
</feature>
<feature type="splice variant" id="VSP_030795" description="In isoform 8." evidence="6">
    <location>
        <begin position="88"/>
        <end position="315"/>
    </location>
</feature>
<feature type="splice variant" id="VSP_030796" description="In isoform 2, isoform 5, isoform 6 and isoform 7." evidence="6 8">
    <location>
        <begin position="223"/>
        <end position="234"/>
    </location>
</feature>
<feature type="splice variant" id="VSP_030797" description="In isoform 2, isoform 5, isoform 6 and isoform 7." evidence="6 8">
    <original>PLQSQTAMFLPPTVPGARTLTETPLRGWPQPKMKSSRQKSKTEKNDGHLEPVTAWEVQVPRVRRLCRGLARPHLFGHD</original>
    <variation>TRVKAAPGPKAALAVIRGGATRAAGVFYPWRFRLLCLLRRWLPRPRAWFIRQELNVTAAAA</variation>
    <location>
        <begin position="238"/>
        <end position="315"/>
    </location>
</feature>
<proteinExistence type="evidence at protein level"/>
<evidence type="ECO:0000250" key="1"/>
<evidence type="ECO:0000255" key="2"/>
<evidence type="ECO:0000255" key="3">
    <source>
        <dbReference type="PROSITE-ProRule" id="PRU10001"/>
    </source>
</evidence>
<evidence type="ECO:0000256" key="4">
    <source>
        <dbReference type="SAM" id="MobiDB-lite"/>
    </source>
</evidence>
<evidence type="ECO:0000269" key="5">
    <source>
    </source>
</evidence>
<evidence type="ECO:0000303" key="6">
    <source>
    </source>
</evidence>
<evidence type="ECO:0000303" key="7">
    <source>
    </source>
</evidence>
<evidence type="ECO:0000303" key="8">
    <source ref="1"/>
</evidence>
<evidence type="ECO:0000305" key="9"/>
<evidence type="ECO:0000305" key="10">
    <source>
    </source>
</evidence>
<keyword id="KW-0025">Alternative splicing</keyword>
<keyword id="KW-0521">NADP</keyword>
<keyword id="KW-0560">Oxidoreductase</keyword>
<keyword id="KW-1267">Proteomics identification</keyword>
<keyword id="KW-1185">Reference proteome</keyword>
<keyword id="KW-0964">Secreted</keyword>
<keyword id="KW-0732">Signal</keyword>
<comment type="function">
    <text evidence="5">Unidirectional NADP(+)-dependent cortisol dehydrogenase (in vitro).</text>
</comment>
<comment type="catalytic activity">
    <reaction evidence="5">
        <text>cortisone + NADPH + H(+) = cortisol + NADP(+)</text>
        <dbReference type="Rhea" id="RHEA:68616"/>
        <dbReference type="ChEBI" id="CHEBI:15378"/>
        <dbReference type="ChEBI" id="CHEBI:16962"/>
        <dbReference type="ChEBI" id="CHEBI:17650"/>
        <dbReference type="ChEBI" id="CHEBI:57783"/>
        <dbReference type="ChEBI" id="CHEBI:58349"/>
    </reaction>
    <physiologicalReaction direction="right-to-left" evidence="10">
        <dbReference type="Rhea" id="RHEA:68618"/>
    </physiologicalReaction>
</comment>
<comment type="subcellular location">
    <subcellularLocation>
        <location evidence="9">Secreted</location>
    </subcellularLocation>
</comment>
<comment type="alternative products">
    <event type="alternative splicing"/>
    <isoform>
        <id>Q7Z5J1-1</id>
        <name>1</name>
        <sequence type="displayed"/>
    </isoform>
    <isoform>
        <id>Q7Z5J1-2</id>
        <name>2</name>
        <name>B</name>
        <sequence type="described" ref="VSP_030796 VSP_030797"/>
    </isoform>
    <isoform>
        <id>Q7Z5J1-3</id>
        <name>3</name>
        <name>G</name>
        <sequence type="described" ref="VSP_030793"/>
    </isoform>
    <isoform>
        <id>Q7Z5J1-4</id>
        <name>4</name>
        <name>F</name>
        <sequence type="described" ref="VSP_030791"/>
    </isoform>
    <isoform>
        <id>Q7Z5J1-5</id>
        <name>5</name>
        <name>C</name>
        <sequence type="described" ref="VSP_030792 VSP_030796 VSP_030797"/>
    </isoform>
    <isoform>
        <id>Q7Z5J1-6</id>
        <name>6</name>
        <name>A</name>
        <sequence type="described" ref="VSP_030793 VSP_030796 VSP_030797"/>
    </isoform>
    <isoform>
        <id>Q7Z5J1-7</id>
        <name>7</name>
        <name>D</name>
        <sequence type="described" ref="VSP_030791 VSP_030796 VSP_030797"/>
    </isoform>
    <isoform>
        <id>Q7Z5J1-8</id>
        <name>8</name>
        <sequence type="described" ref="VSP_030794 VSP_030795"/>
    </isoform>
</comment>
<comment type="tissue specificity">
    <text evidence="5">Highly expressed in the brain.</text>
</comment>
<comment type="similarity">
    <text evidence="9">Belongs to the short-chain dehydrogenases/reductases (SDR) family.</text>
</comment>
<comment type="caution">
    <text evidence="10">Present in human, non-human primate, sheep, pig and many other higher organisms, whereas an ortholog is absent in the genomes of mouse, rat and rabbit.</text>
</comment>
<accession>Q7Z5J1</accession>
<accession>Q05D45</accession>
<accession>Q52LF4</accession>
<accession>Q7Z5I9</accession>
<accession>Q7Z5J0</accession>
<accession>Q7Z5P5</accession>
<accession>Q7Z5P6</accession>
<accession>Q7Z5P7</accession>
<accession>Q7Z5P8</accession>
<gene>
    <name type="primary">HSD11B1L</name>
    <name type="synonym">HSD3</name>
    <name evidence="7" type="synonym">SCDR10B</name>
    <name type="synonym">SDR26C2</name>
</gene>
<sequence length="315" mass="34288">MKVLLLTGLGALFFAYYWDDNFDPASLQGARVLLTGANAGVGEELAYHYARLGSHLVLTAHTEALLQKVVGNCRKLGAPKVFYIAADMASPEAPESVVQFALDKLGGLDYLVLNHIGGAPAGTRARSPQATRWLMQVNFVSYVQLTSRALPSLTDSKGSLVVVSSLLGRVPTSFSTPYSAAKFALDGFFGSLRRELDVQDVNVAITMCVLGLRDRASAAEAVRSSTSRPRQPEHRGVPLQSQTAMFLPPTVPGARTLTETPLRGWPQPKMKSSRQKSKTEKNDGHLEPVTAWEVQVPRVRRLCRGLARPHLFGHD</sequence>
<reference key="1">
    <citation type="submission" date="2003-06" db="EMBL/GenBank/DDBJ databases">
        <authorList>
            <person name="Huang C.Q."/>
            <person name="Wu S.L."/>
            <person name="Chen Z."/>
            <person name="Xiao P.J."/>
        </authorList>
    </citation>
    <scope>NUCLEOTIDE SEQUENCE [MRNA] (ISOFORMS 1; 2; 3; 4; 5; 6 AND 7)</scope>
</reference>
<reference key="2">
    <citation type="journal article" date="2004" name="Nature">
        <title>The DNA sequence and biology of human chromosome 19.</title>
        <authorList>
            <person name="Grimwood J."/>
            <person name="Gordon L.A."/>
            <person name="Olsen A.S."/>
            <person name="Terry A."/>
            <person name="Schmutz J."/>
            <person name="Lamerdin J.E."/>
            <person name="Hellsten U."/>
            <person name="Goodstein D."/>
            <person name="Couronne O."/>
            <person name="Tran-Gyamfi M."/>
            <person name="Aerts A."/>
            <person name="Altherr M."/>
            <person name="Ashworth L."/>
            <person name="Bajorek E."/>
            <person name="Black S."/>
            <person name="Branscomb E."/>
            <person name="Caenepeel S."/>
            <person name="Carrano A.V."/>
            <person name="Caoile C."/>
            <person name="Chan Y.M."/>
            <person name="Christensen M."/>
            <person name="Cleland C.A."/>
            <person name="Copeland A."/>
            <person name="Dalin E."/>
            <person name="Dehal P."/>
            <person name="Denys M."/>
            <person name="Detter J.C."/>
            <person name="Escobar J."/>
            <person name="Flowers D."/>
            <person name="Fotopulos D."/>
            <person name="Garcia C."/>
            <person name="Georgescu A.M."/>
            <person name="Glavina T."/>
            <person name="Gomez M."/>
            <person name="Gonzales E."/>
            <person name="Groza M."/>
            <person name="Hammon N."/>
            <person name="Hawkins T."/>
            <person name="Haydu L."/>
            <person name="Ho I."/>
            <person name="Huang W."/>
            <person name="Israni S."/>
            <person name="Jett J."/>
            <person name="Kadner K."/>
            <person name="Kimball H."/>
            <person name="Kobayashi A."/>
            <person name="Larionov V."/>
            <person name="Leem S.-H."/>
            <person name="Lopez F."/>
            <person name="Lou Y."/>
            <person name="Lowry S."/>
            <person name="Malfatti S."/>
            <person name="Martinez D."/>
            <person name="McCready P.M."/>
            <person name="Medina C."/>
            <person name="Morgan J."/>
            <person name="Nelson K."/>
            <person name="Nolan M."/>
            <person name="Ovcharenko I."/>
            <person name="Pitluck S."/>
            <person name="Pollard M."/>
            <person name="Popkie A.P."/>
            <person name="Predki P."/>
            <person name="Quan G."/>
            <person name="Ramirez L."/>
            <person name="Rash S."/>
            <person name="Retterer J."/>
            <person name="Rodriguez A."/>
            <person name="Rogers S."/>
            <person name="Salamov A."/>
            <person name="Salazar A."/>
            <person name="She X."/>
            <person name="Smith D."/>
            <person name="Slezak T."/>
            <person name="Solovyev V."/>
            <person name="Thayer N."/>
            <person name="Tice H."/>
            <person name="Tsai M."/>
            <person name="Ustaszewska A."/>
            <person name="Vo N."/>
            <person name="Wagner M."/>
            <person name="Wheeler J."/>
            <person name="Wu K."/>
            <person name="Xie G."/>
            <person name="Yang J."/>
            <person name="Dubchak I."/>
            <person name="Furey T.S."/>
            <person name="DeJong P."/>
            <person name="Dickson M."/>
            <person name="Gordon D."/>
            <person name="Eichler E.E."/>
            <person name="Pennacchio L.A."/>
            <person name="Richardson P."/>
            <person name="Stubbs L."/>
            <person name="Rokhsar D.S."/>
            <person name="Myers R.M."/>
            <person name="Rubin E.M."/>
            <person name="Lucas S.M."/>
        </authorList>
    </citation>
    <scope>NUCLEOTIDE SEQUENCE [LARGE SCALE GENOMIC DNA]</scope>
</reference>
<reference key="3">
    <citation type="submission" date="2005-09" db="EMBL/GenBank/DDBJ databases">
        <authorList>
            <person name="Mural R.J."/>
            <person name="Istrail S."/>
            <person name="Sutton G.G."/>
            <person name="Florea L."/>
            <person name="Halpern A.L."/>
            <person name="Mobarry C.M."/>
            <person name="Lippert R."/>
            <person name="Walenz B."/>
            <person name="Shatkay H."/>
            <person name="Dew I."/>
            <person name="Miller J.R."/>
            <person name="Flanigan M.J."/>
            <person name="Edwards N.J."/>
            <person name="Bolanos R."/>
            <person name="Fasulo D."/>
            <person name="Halldorsson B.V."/>
            <person name="Hannenhalli S."/>
            <person name="Turner R."/>
            <person name="Yooseph S."/>
            <person name="Lu F."/>
            <person name="Nusskern D.R."/>
            <person name="Shue B.C."/>
            <person name="Zheng X.H."/>
            <person name="Zhong F."/>
            <person name="Delcher A.L."/>
            <person name="Huson D.H."/>
            <person name="Kravitz S.A."/>
            <person name="Mouchard L."/>
            <person name="Reinert K."/>
            <person name="Remington K.A."/>
            <person name="Clark A.G."/>
            <person name="Waterman M.S."/>
            <person name="Eichler E.E."/>
            <person name="Adams M.D."/>
            <person name="Hunkapiller M.W."/>
            <person name="Myers E.W."/>
            <person name="Venter J.C."/>
        </authorList>
    </citation>
    <scope>NUCLEOTIDE SEQUENCE [LARGE SCALE GENOMIC DNA]</scope>
</reference>
<reference key="4">
    <citation type="journal article" date="2004" name="Genome Res.">
        <title>The status, quality, and expansion of the NIH full-length cDNA project: the Mammalian Gene Collection (MGC).</title>
        <authorList>
            <consortium name="The MGC Project Team"/>
        </authorList>
    </citation>
    <scope>NUCLEOTIDE SEQUENCE [LARGE SCALE MRNA] (ISOFORMS 7 AND 8)</scope>
    <scope>NUCLEOTIDE SEQUENCE [LARGE SCALE MRNA] OF 106-315 (ISOFORM 5)</scope>
    <source>
        <tissue>Brain</tissue>
        <tissue>Ovary</tissue>
    </source>
</reference>
<reference key="5">
    <citation type="journal article" date="2009" name="Acta Biochim. Pol.">
        <title>Isolation and characterization of novel human short-chain dehydrogenase/reductase SCDR10B which is highly expressed in the brain and acts as hydroxysteroid dehydrogenase.</title>
        <authorList>
            <person name="Huang C."/>
            <person name="Wan B."/>
            <person name="Gao B."/>
            <person name="Hexige S."/>
            <person name="Yu L."/>
        </authorList>
    </citation>
    <scope>FUNCTION</scope>
    <scope>CATALYTIC ACTIVITY</scope>
    <scope>TISSUE SPECIFICITY</scope>
</reference>
<dbReference type="EC" id="1.1.1.-" evidence="5"/>
<dbReference type="EMBL" id="AY268351">
    <property type="protein sequence ID" value="AAP42285.1"/>
    <property type="molecule type" value="mRNA"/>
</dbReference>
<dbReference type="EMBL" id="AY268352">
    <property type="protein sequence ID" value="AAP42286.1"/>
    <property type="molecule type" value="mRNA"/>
</dbReference>
<dbReference type="EMBL" id="AY268353">
    <property type="protein sequence ID" value="AAP42287.1"/>
    <property type="molecule type" value="mRNA"/>
</dbReference>
<dbReference type="EMBL" id="AY268354">
    <property type="protein sequence ID" value="AAP42288.1"/>
    <property type="molecule type" value="mRNA"/>
</dbReference>
<dbReference type="EMBL" id="AY313894">
    <property type="protein sequence ID" value="AAP83166.1"/>
    <property type="molecule type" value="mRNA"/>
</dbReference>
<dbReference type="EMBL" id="AY313895">
    <property type="protein sequence ID" value="AAP83167.1"/>
    <property type="molecule type" value="mRNA"/>
</dbReference>
<dbReference type="EMBL" id="AY313896">
    <property type="protein sequence ID" value="AAP83168.1"/>
    <property type="molecule type" value="mRNA"/>
</dbReference>
<dbReference type="EMBL" id="AC011499">
    <property type="status" value="NOT_ANNOTATED_CDS"/>
    <property type="molecule type" value="Genomic_DNA"/>
</dbReference>
<dbReference type="EMBL" id="CH471139">
    <property type="protein sequence ID" value="EAW69156.1"/>
    <property type="molecule type" value="Genomic_DNA"/>
</dbReference>
<dbReference type="EMBL" id="CH471139">
    <property type="protein sequence ID" value="EAW69157.1"/>
    <property type="molecule type" value="Genomic_DNA"/>
</dbReference>
<dbReference type="EMBL" id="BC053546">
    <property type="protein sequence ID" value="AAH53546.1"/>
    <property type="molecule type" value="mRNA"/>
</dbReference>
<dbReference type="EMBL" id="BC072434">
    <property type="protein sequence ID" value="AAH72434.1"/>
    <property type="molecule type" value="mRNA"/>
</dbReference>
<dbReference type="EMBL" id="BC093950">
    <property type="protein sequence ID" value="AAH93950.1"/>
    <property type="molecule type" value="mRNA"/>
</dbReference>
<dbReference type="EMBL" id="BC112187">
    <property type="protein sequence ID" value="AAI12188.1"/>
    <property type="molecule type" value="mRNA"/>
</dbReference>
<dbReference type="EMBL" id="BC018336">
    <property type="protein sequence ID" value="AAH18336.1"/>
    <property type="molecule type" value="mRNA"/>
</dbReference>
<dbReference type="CCDS" id="CCDS12144.1">
    <molecule id="Q7Z5J1-6"/>
</dbReference>
<dbReference type="CCDS" id="CCDS12145.1">
    <molecule id="Q7Z5J1-2"/>
</dbReference>
<dbReference type="CCDS" id="CCDS12146.1">
    <molecule id="Q7Z5J1-5"/>
</dbReference>
<dbReference type="CCDS" id="CCDS45931.1">
    <molecule id="Q7Z5J1-1"/>
</dbReference>
<dbReference type="CCDS" id="CCDS45932.1">
    <molecule id="Q7Z5J1-4"/>
</dbReference>
<dbReference type="CCDS" id="CCDS58641.1">
    <molecule id="Q7Z5J1-3"/>
</dbReference>
<dbReference type="CCDS" id="CCDS58642.1">
    <molecule id="Q7Z5J1-7"/>
</dbReference>
<dbReference type="RefSeq" id="NP_001254798.1">
    <molecule id="Q7Z5J1-7"/>
    <property type="nucleotide sequence ID" value="NM_001267869.2"/>
</dbReference>
<dbReference type="RefSeq" id="NP_001254799.1">
    <property type="nucleotide sequence ID" value="NM_001267870.1"/>
</dbReference>
<dbReference type="RefSeq" id="NP_001254800.1">
    <molecule id="Q7Z5J1-3"/>
    <property type="nucleotide sequence ID" value="NM_001267871.2"/>
</dbReference>
<dbReference type="RefSeq" id="NP_940935.1">
    <molecule id="Q7Z5J1-1"/>
    <property type="nucleotide sequence ID" value="NM_198533.3"/>
</dbReference>
<dbReference type="RefSeq" id="NP_941993.1">
    <molecule id="Q7Z5J1-4"/>
    <property type="nucleotide sequence ID" value="NM_198704.3"/>
</dbReference>
<dbReference type="RefSeq" id="NP_941994.1">
    <molecule id="Q7Z5J1-6"/>
    <property type="nucleotide sequence ID" value="NM_198705.3"/>
</dbReference>
<dbReference type="RefSeq" id="NP_941995.1">
    <molecule id="Q7Z5J1-2"/>
    <property type="nucleotide sequence ID" value="NM_198706.3"/>
</dbReference>
<dbReference type="RefSeq" id="NP_941996.1">
    <molecule id="Q7Z5J1-5"/>
    <property type="nucleotide sequence ID" value="NM_198707.3"/>
</dbReference>
<dbReference type="RefSeq" id="NP_941997.1">
    <molecule id="Q7Z5J1-7"/>
    <property type="nucleotide sequence ID" value="NM_198708.3"/>
</dbReference>
<dbReference type="SMR" id="Q7Z5J1"/>
<dbReference type="BioGRID" id="131927">
    <property type="interactions" value="7"/>
</dbReference>
<dbReference type="FunCoup" id="Q7Z5J1">
    <property type="interactions" value="860"/>
</dbReference>
<dbReference type="IntAct" id="Q7Z5J1">
    <property type="interactions" value="2"/>
</dbReference>
<dbReference type="MINT" id="Q7Z5J1"/>
<dbReference type="STRING" id="9606.ENSP00000480443"/>
<dbReference type="iPTMnet" id="Q7Z5J1"/>
<dbReference type="PhosphoSitePlus" id="Q7Z5J1"/>
<dbReference type="BioMuta" id="HSD11B1L"/>
<dbReference type="DMDM" id="74750135"/>
<dbReference type="MassIVE" id="Q7Z5J1"/>
<dbReference type="PaxDb" id="9606-ENSP00000480443"/>
<dbReference type="PeptideAtlas" id="Q7Z5J1"/>
<dbReference type="Antibodypedia" id="64961">
    <property type="antibodies" value="114 antibodies from 18 providers"/>
</dbReference>
<dbReference type="DNASU" id="374875"/>
<dbReference type="Ensembl" id="ENST00000301382.8">
    <molecule id="Q7Z5J1-6"/>
    <property type="protein sequence ID" value="ENSP00000301382.4"/>
    <property type="gene ID" value="ENSG00000167733.14"/>
</dbReference>
<dbReference type="Ensembl" id="ENST00000339423.7">
    <molecule id="Q7Z5J1-2"/>
    <property type="protein sequence ID" value="ENSP00000340436.2"/>
    <property type="gene ID" value="ENSG00000167733.14"/>
</dbReference>
<dbReference type="Ensembl" id="ENST00000342970.6">
    <molecule id="Q7Z5J1-5"/>
    <property type="protein sequence ID" value="ENSP00000343451.2"/>
    <property type="gene ID" value="ENSG00000167733.14"/>
</dbReference>
<dbReference type="Ensembl" id="ENST00000411793.6">
    <molecule id="Q7Z5J1-4"/>
    <property type="protein sequence ID" value="ENSP00000398955.2"/>
    <property type="gene ID" value="ENSG00000167733.14"/>
</dbReference>
<dbReference type="Ensembl" id="ENST00000422535.6">
    <molecule id="Q7Z5J1-8"/>
    <property type="protein sequence ID" value="ENSP00000409592.2"/>
    <property type="gene ID" value="ENSG00000167733.14"/>
</dbReference>
<dbReference type="Ensembl" id="ENST00000423665.6">
    <molecule id="Q7Z5J1-1"/>
    <property type="protein sequence ID" value="ENSP00000407154.2"/>
    <property type="gene ID" value="ENSG00000167733.14"/>
</dbReference>
<dbReference type="Ensembl" id="ENST00000577917.5">
    <molecule id="Q7Z5J1-3"/>
    <property type="protein sequence ID" value="ENSP00000463073.1"/>
    <property type="gene ID" value="ENSG00000167733.14"/>
</dbReference>
<dbReference type="Ensembl" id="ENST00000581521.5">
    <molecule id="Q7Z5J1-2"/>
    <property type="protein sequence ID" value="ENSP00000463794.1"/>
    <property type="gene ID" value="ENSG00000167733.14"/>
</dbReference>
<dbReference type="Ensembl" id="ENST00000581773.5">
    <molecule id="Q7Z5J1-2"/>
    <property type="protein sequence ID" value="ENSP00000462975.1"/>
    <property type="gene ID" value="ENSG00000167733.14"/>
</dbReference>
<dbReference type="Ensembl" id="ENST00000581893.5">
    <molecule id="Q7Z5J1-7"/>
    <property type="protein sequence ID" value="ENSP00000464454.1"/>
    <property type="gene ID" value="ENSG00000167733.14"/>
</dbReference>
<dbReference type="Ensembl" id="ENST00000583928.5">
    <molecule id="Q7Z5J1-7"/>
    <property type="protein sequence ID" value="ENSP00000462586.1"/>
    <property type="gene ID" value="ENSG00000167733.14"/>
</dbReference>
<dbReference type="GeneID" id="374875"/>
<dbReference type="KEGG" id="hsa:374875"/>
<dbReference type="MANE-Select" id="ENST00000339423.7">
    <molecule id="Q7Z5J1-2"/>
    <property type="protein sequence ID" value="ENSP00000340436.2"/>
    <property type="RefSeq nucleotide sequence ID" value="NM_198706.3"/>
    <property type="RefSeq protein sequence ID" value="NP_941995.1"/>
</dbReference>
<dbReference type="UCSC" id="uc002mcj.6">
    <molecule id="Q7Z5J1-1"/>
    <property type="organism name" value="human"/>
</dbReference>
<dbReference type="AGR" id="HGNC:30419"/>
<dbReference type="CTD" id="374875"/>
<dbReference type="DisGeNET" id="374875"/>
<dbReference type="GeneCards" id="HSD11B1L"/>
<dbReference type="HGNC" id="HGNC:30419">
    <property type="gene designation" value="HSD11B1L"/>
</dbReference>
<dbReference type="HPA" id="ENSG00000167733">
    <property type="expression patterns" value="Tissue enriched (brain)"/>
</dbReference>
<dbReference type="neXtProt" id="NX_Q7Z5J1"/>
<dbReference type="OpenTargets" id="ENSG00000167733"/>
<dbReference type="PharmGKB" id="PA144596423"/>
<dbReference type="VEuPathDB" id="HostDB:ENSG00000167733"/>
<dbReference type="eggNOG" id="KOG1205">
    <property type="taxonomic scope" value="Eukaryota"/>
</dbReference>
<dbReference type="GeneTree" id="ENSGT00940000162487"/>
<dbReference type="HOGENOM" id="CLU_1488559_0_0_1"/>
<dbReference type="InParanoid" id="Q7Z5J1"/>
<dbReference type="OMA" id="EYTRWLM"/>
<dbReference type="OrthoDB" id="1933717at2759"/>
<dbReference type="PAN-GO" id="Q7Z5J1">
    <property type="GO annotations" value="2 GO annotations based on evolutionary models"/>
</dbReference>
<dbReference type="PhylomeDB" id="Q7Z5J1"/>
<dbReference type="TreeFam" id="TF329114"/>
<dbReference type="PathwayCommons" id="Q7Z5J1"/>
<dbReference type="SignaLink" id="Q7Z5J1"/>
<dbReference type="BioGRID-ORCS" id="374875">
    <property type="hits" value="72 hits in 1155 CRISPR screens"/>
</dbReference>
<dbReference type="ChiTaRS" id="HSD11B1L">
    <property type="organism name" value="human"/>
</dbReference>
<dbReference type="GenomeRNAi" id="374875"/>
<dbReference type="Pharos" id="Q7Z5J1">
    <property type="development level" value="Tbio"/>
</dbReference>
<dbReference type="PRO" id="PR:Q7Z5J1"/>
<dbReference type="Proteomes" id="UP000005640">
    <property type="component" value="Chromosome 19"/>
</dbReference>
<dbReference type="RNAct" id="Q7Z5J1">
    <property type="molecule type" value="protein"/>
</dbReference>
<dbReference type="Bgee" id="ENSG00000167733">
    <property type="expression patterns" value="Expressed in cingulate cortex and 132 other cell types or tissues"/>
</dbReference>
<dbReference type="ExpressionAtlas" id="Q7Z5J1">
    <property type="expression patterns" value="baseline and differential"/>
</dbReference>
<dbReference type="GO" id="GO:0005576">
    <property type="term" value="C:extracellular region"/>
    <property type="evidence" value="ECO:0007669"/>
    <property type="project" value="UniProtKB-SubCell"/>
</dbReference>
<dbReference type="GO" id="GO:0043231">
    <property type="term" value="C:intracellular membrane-bounded organelle"/>
    <property type="evidence" value="ECO:0000314"/>
    <property type="project" value="HPA"/>
</dbReference>
<dbReference type="GO" id="GO:0005654">
    <property type="term" value="C:nucleoplasm"/>
    <property type="evidence" value="ECO:0000314"/>
    <property type="project" value="HPA"/>
</dbReference>
<dbReference type="GO" id="GO:0016491">
    <property type="term" value="F:oxidoreductase activity"/>
    <property type="evidence" value="ECO:0000318"/>
    <property type="project" value="GO_Central"/>
</dbReference>
<dbReference type="FunFam" id="3.40.50.720:FF:000359">
    <property type="entry name" value="hydroxysteroid 11-beta-dehydrogenase 1-like protein isoform X1"/>
    <property type="match status" value="1"/>
</dbReference>
<dbReference type="Gene3D" id="3.40.50.720">
    <property type="entry name" value="NAD(P)-binding Rossmann-like Domain"/>
    <property type="match status" value="1"/>
</dbReference>
<dbReference type="InterPro" id="IPR051253">
    <property type="entry name" value="11-beta-HSD"/>
</dbReference>
<dbReference type="InterPro" id="IPR036291">
    <property type="entry name" value="NAD(P)-bd_dom_sf"/>
</dbReference>
<dbReference type="InterPro" id="IPR020904">
    <property type="entry name" value="Sc_DH/Rdtase_CS"/>
</dbReference>
<dbReference type="InterPro" id="IPR002347">
    <property type="entry name" value="SDR_fam"/>
</dbReference>
<dbReference type="PANTHER" id="PTHR44279">
    <property type="entry name" value="HYDROXYSTEROID (11-BETA) DEHYDROGENASE 1-LIKE B-RELATED"/>
    <property type="match status" value="1"/>
</dbReference>
<dbReference type="PANTHER" id="PTHR44279:SF3">
    <property type="entry name" value="HYDROXYSTEROID 11-BETA-DEHYDROGENASE 1-LIKE PROTEIN"/>
    <property type="match status" value="1"/>
</dbReference>
<dbReference type="Pfam" id="PF00106">
    <property type="entry name" value="adh_short"/>
    <property type="match status" value="1"/>
</dbReference>
<dbReference type="PRINTS" id="PR00081">
    <property type="entry name" value="GDHRDH"/>
</dbReference>
<dbReference type="SUPFAM" id="SSF51735">
    <property type="entry name" value="NAD(P)-binding Rossmann-fold domains"/>
    <property type="match status" value="1"/>
</dbReference>
<dbReference type="PROSITE" id="PS00061">
    <property type="entry name" value="ADH_SHORT"/>
    <property type="match status" value="1"/>
</dbReference>
<name>DHI1L_HUMAN</name>